<gene>
    <name evidence="1" type="primary">truB</name>
    <name type="ordered locus">SGR_1808</name>
</gene>
<dbReference type="EC" id="5.4.99.25" evidence="1"/>
<dbReference type="EMBL" id="AP009493">
    <property type="protein sequence ID" value="BAG18637.1"/>
    <property type="molecule type" value="Genomic_DNA"/>
</dbReference>
<dbReference type="RefSeq" id="WP_003965879.1">
    <property type="nucleotide sequence ID" value="NC_010572.1"/>
</dbReference>
<dbReference type="SMR" id="B1VYN2"/>
<dbReference type="KEGG" id="sgr:SGR_1808"/>
<dbReference type="eggNOG" id="COG0130">
    <property type="taxonomic scope" value="Bacteria"/>
</dbReference>
<dbReference type="HOGENOM" id="CLU_032087_0_0_11"/>
<dbReference type="Proteomes" id="UP000001685">
    <property type="component" value="Chromosome"/>
</dbReference>
<dbReference type="GO" id="GO:0003723">
    <property type="term" value="F:RNA binding"/>
    <property type="evidence" value="ECO:0007669"/>
    <property type="project" value="InterPro"/>
</dbReference>
<dbReference type="GO" id="GO:0160148">
    <property type="term" value="F:tRNA pseudouridine(55) synthase activity"/>
    <property type="evidence" value="ECO:0007669"/>
    <property type="project" value="UniProtKB-EC"/>
</dbReference>
<dbReference type="GO" id="GO:1990481">
    <property type="term" value="P:mRNA pseudouridine synthesis"/>
    <property type="evidence" value="ECO:0007669"/>
    <property type="project" value="TreeGrafter"/>
</dbReference>
<dbReference type="GO" id="GO:0031119">
    <property type="term" value="P:tRNA pseudouridine synthesis"/>
    <property type="evidence" value="ECO:0007669"/>
    <property type="project" value="UniProtKB-UniRule"/>
</dbReference>
<dbReference type="CDD" id="cd02573">
    <property type="entry name" value="PseudoU_synth_EcTruB"/>
    <property type="match status" value="1"/>
</dbReference>
<dbReference type="FunFam" id="3.30.2350.10:FF:000011">
    <property type="entry name" value="tRNA pseudouridine synthase B"/>
    <property type="match status" value="1"/>
</dbReference>
<dbReference type="Gene3D" id="3.30.2350.10">
    <property type="entry name" value="Pseudouridine synthase"/>
    <property type="match status" value="1"/>
</dbReference>
<dbReference type="Gene3D" id="2.30.130.10">
    <property type="entry name" value="PUA domain"/>
    <property type="match status" value="1"/>
</dbReference>
<dbReference type="HAMAP" id="MF_01080">
    <property type="entry name" value="TruB_bact"/>
    <property type="match status" value="1"/>
</dbReference>
<dbReference type="InterPro" id="IPR020103">
    <property type="entry name" value="PsdUridine_synth_cat_dom_sf"/>
</dbReference>
<dbReference type="InterPro" id="IPR002501">
    <property type="entry name" value="PsdUridine_synth_N"/>
</dbReference>
<dbReference type="InterPro" id="IPR015947">
    <property type="entry name" value="PUA-like_sf"/>
</dbReference>
<dbReference type="InterPro" id="IPR036974">
    <property type="entry name" value="PUA_sf"/>
</dbReference>
<dbReference type="InterPro" id="IPR015225">
    <property type="entry name" value="tRNA_psdUridine_synth_fam2_C"/>
</dbReference>
<dbReference type="InterPro" id="IPR014780">
    <property type="entry name" value="tRNA_psdUridine_synth_TruB"/>
</dbReference>
<dbReference type="InterPro" id="IPR032819">
    <property type="entry name" value="TruB_C"/>
</dbReference>
<dbReference type="NCBIfam" id="TIGR00431">
    <property type="entry name" value="TruB"/>
    <property type="match status" value="1"/>
</dbReference>
<dbReference type="PANTHER" id="PTHR13767:SF2">
    <property type="entry name" value="PSEUDOURIDYLATE SYNTHASE TRUB1"/>
    <property type="match status" value="1"/>
</dbReference>
<dbReference type="PANTHER" id="PTHR13767">
    <property type="entry name" value="TRNA-PSEUDOURIDINE SYNTHASE"/>
    <property type="match status" value="1"/>
</dbReference>
<dbReference type="Pfam" id="PF09142">
    <property type="entry name" value="TruB_C"/>
    <property type="match status" value="1"/>
</dbReference>
<dbReference type="Pfam" id="PF16198">
    <property type="entry name" value="TruB_C_2"/>
    <property type="match status" value="1"/>
</dbReference>
<dbReference type="Pfam" id="PF01509">
    <property type="entry name" value="TruB_N"/>
    <property type="match status" value="1"/>
</dbReference>
<dbReference type="SUPFAM" id="SSF55120">
    <property type="entry name" value="Pseudouridine synthase"/>
    <property type="match status" value="1"/>
</dbReference>
<dbReference type="SUPFAM" id="SSF88697">
    <property type="entry name" value="PUA domain-like"/>
    <property type="match status" value="1"/>
</dbReference>
<accession>B1VYN2</accession>
<evidence type="ECO:0000255" key="1">
    <source>
        <dbReference type="HAMAP-Rule" id="MF_01080"/>
    </source>
</evidence>
<reference key="1">
    <citation type="journal article" date="2008" name="J. Bacteriol.">
        <title>Genome sequence of the streptomycin-producing microorganism Streptomyces griseus IFO 13350.</title>
        <authorList>
            <person name="Ohnishi Y."/>
            <person name="Ishikawa J."/>
            <person name="Hara H."/>
            <person name="Suzuki H."/>
            <person name="Ikenoya M."/>
            <person name="Ikeda H."/>
            <person name="Yamashita A."/>
            <person name="Hattori M."/>
            <person name="Horinouchi S."/>
        </authorList>
    </citation>
    <scope>NUCLEOTIDE SEQUENCE [LARGE SCALE GENOMIC DNA]</scope>
    <source>
        <strain>JCM 4626 / CBS 651.72 / NBRC 13350 / KCC S-0626 / ISP 5235</strain>
    </source>
</reference>
<comment type="function">
    <text evidence="1">Responsible for synthesis of pseudouridine from uracil-55 in the psi GC loop of transfer RNAs.</text>
</comment>
<comment type="catalytic activity">
    <reaction evidence="1">
        <text>uridine(55) in tRNA = pseudouridine(55) in tRNA</text>
        <dbReference type="Rhea" id="RHEA:42532"/>
        <dbReference type="Rhea" id="RHEA-COMP:10101"/>
        <dbReference type="Rhea" id="RHEA-COMP:10102"/>
        <dbReference type="ChEBI" id="CHEBI:65314"/>
        <dbReference type="ChEBI" id="CHEBI:65315"/>
        <dbReference type="EC" id="5.4.99.25"/>
    </reaction>
</comment>
<comment type="similarity">
    <text evidence="1">Belongs to the pseudouridine synthase TruB family. Type 1 subfamily.</text>
</comment>
<organism>
    <name type="scientific">Streptomyces griseus subsp. griseus (strain JCM 4626 / CBS 651.72 / NBRC 13350 / KCC S-0626 / ISP 5235)</name>
    <dbReference type="NCBI Taxonomy" id="455632"/>
    <lineage>
        <taxon>Bacteria</taxon>
        <taxon>Bacillati</taxon>
        <taxon>Actinomycetota</taxon>
        <taxon>Actinomycetes</taxon>
        <taxon>Kitasatosporales</taxon>
        <taxon>Streptomycetaceae</taxon>
        <taxon>Streptomyces</taxon>
    </lineage>
</organism>
<protein>
    <recommendedName>
        <fullName evidence="1">tRNA pseudouridine synthase B</fullName>
        <ecNumber evidence="1">5.4.99.25</ecNumber>
    </recommendedName>
    <alternativeName>
        <fullName evidence="1">tRNA pseudouridine(55) synthase</fullName>
        <shortName evidence="1">Psi55 synthase</shortName>
    </alternativeName>
    <alternativeName>
        <fullName evidence="1">tRNA pseudouridylate synthase</fullName>
    </alternativeName>
    <alternativeName>
        <fullName evidence="1">tRNA-uridine isomerase</fullName>
    </alternativeName>
</protein>
<name>TRUB_STRGG</name>
<proteinExistence type="inferred from homology"/>
<keyword id="KW-0413">Isomerase</keyword>
<keyword id="KW-0819">tRNA processing</keyword>
<sequence length="299" mass="31590">MTEQTTTPDGLVIVDKPSGFTSHDVVAKMRGIARTRRVGHAGTLDPMATGVLVLGVQRATKLLGHLALTEKEYLGTIRLGQDTVTDDAEGEITSSTDASGVTRASIDAGVAALTGRIMQVPSKVSAIKIDGKRSYARVRGGEEFEIPARPVTISSFRVYDVREAVAEDGTPVLDLVVSVVCSSGTYIRAIARDLGAGLGVGGHLTALRRTRVGPYGLDAARTLDQHQEELTVMPVAEAAASAFPRWDVDEKRAKLLLNGVRLDMPAHPPGPVAVFGPDGAFLVLVEEEKGKAKSLAVFA</sequence>
<feature type="chain" id="PRO_1000136817" description="tRNA pseudouridine synthase B">
    <location>
        <begin position="1"/>
        <end position="299"/>
    </location>
</feature>
<feature type="active site" description="Nucleophile" evidence="1">
    <location>
        <position position="45"/>
    </location>
</feature>